<organism>
    <name type="scientific">Carassius auratus</name>
    <name type="common">Goldfish</name>
    <dbReference type="NCBI Taxonomy" id="7957"/>
    <lineage>
        <taxon>Eukaryota</taxon>
        <taxon>Metazoa</taxon>
        <taxon>Chordata</taxon>
        <taxon>Craniata</taxon>
        <taxon>Vertebrata</taxon>
        <taxon>Euteleostomi</taxon>
        <taxon>Actinopterygii</taxon>
        <taxon>Neopterygii</taxon>
        <taxon>Teleostei</taxon>
        <taxon>Ostariophysi</taxon>
        <taxon>Cypriniformes</taxon>
        <taxon>Cyprinidae</taxon>
        <taxon>Cyprininae</taxon>
        <taxon>Carassius</taxon>
    </lineage>
</organism>
<evidence type="ECO:0000250" key="1">
    <source>
        <dbReference type="UniProtKB" id="P00403"/>
    </source>
</evidence>
<evidence type="ECO:0000250" key="2">
    <source>
        <dbReference type="UniProtKB" id="P00410"/>
    </source>
</evidence>
<evidence type="ECO:0000250" key="3">
    <source>
        <dbReference type="UniProtKB" id="P68530"/>
    </source>
</evidence>
<evidence type="ECO:0000305" key="4"/>
<sequence>MAHPTQLGFQDAASPVMEELLHFHDHALMIVFLISTLVLYIIIAMVSTKLTNKYILDSQEIEIVWTILPAVILVLIALPSLRILYLMDEINDPHLTIKAMGHQWYWSYEYTDYENLGFDSYMVPTQDLAPGQFRLLETDHRMVVPMESPVRILVSAEDVLHSWAVPSLGVKMDAVPGRLNQTAFIASRPGVFYGQCSEICGANHSFMPIVVEAVPLEHFENWSSLMLEDA</sequence>
<name>COX2_CARAU</name>
<feature type="chain" id="PRO_0000183539" description="Cytochrome c oxidase subunit 2">
    <location>
        <begin position="1"/>
        <end position="230"/>
    </location>
</feature>
<feature type="topological domain" description="Mitochondrial intermembrane" evidence="3">
    <location>
        <begin position="1"/>
        <end position="14"/>
    </location>
</feature>
<feature type="transmembrane region" description="Helical; Name=I" evidence="3">
    <location>
        <begin position="15"/>
        <end position="45"/>
    </location>
</feature>
<feature type="topological domain" description="Mitochondrial matrix" evidence="3">
    <location>
        <begin position="46"/>
        <end position="59"/>
    </location>
</feature>
<feature type="transmembrane region" description="Helical; Name=II" evidence="3">
    <location>
        <begin position="60"/>
        <end position="87"/>
    </location>
</feature>
<feature type="topological domain" description="Mitochondrial intermembrane" evidence="3">
    <location>
        <begin position="88"/>
        <end position="230"/>
    </location>
</feature>
<feature type="binding site" evidence="3">
    <location>
        <position position="161"/>
    </location>
    <ligand>
        <name>Cu cation</name>
        <dbReference type="ChEBI" id="CHEBI:23378"/>
        <label>A1</label>
    </ligand>
</feature>
<feature type="binding site" evidence="3">
    <location>
        <position position="196"/>
    </location>
    <ligand>
        <name>Cu cation</name>
        <dbReference type="ChEBI" id="CHEBI:23378"/>
        <label>A1</label>
    </ligand>
</feature>
<feature type="binding site" evidence="3">
    <location>
        <position position="196"/>
    </location>
    <ligand>
        <name>Cu cation</name>
        <dbReference type="ChEBI" id="CHEBI:23378"/>
        <label>A2</label>
    </ligand>
</feature>
<feature type="binding site" evidence="3">
    <location>
        <position position="198"/>
    </location>
    <ligand>
        <name>Cu cation</name>
        <dbReference type="ChEBI" id="CHEBI:23378"/>
        <label>A2</label>
    </ligand>
</feature>
<feature type="binding site" evidence="3">
    <location>
        <position position="198"/>
    </location>
    <ligand>
        <name>Mg(2+)</name>
        <dbReference type="ChEBI" id="CHEBI:18420"/>
        <note>ligand shared with MT-CO1</note>
    </ligand>
</feature>
<feature type="binding site" evidence="3">
    <location>
        <position position="200"/>
    </location>
    <ligand>
        <name>Cu cation</name>
        <dbReference type="ChEBI" id="CHEBI:23378"/>
        <label>A1</label>
    </ligand>
</feature>
<feature type="binding site" evidence="3">
    <location>
        <position position="200"/>
    </location>
    <ligand>
        <name>Cu cation</name>
        <dbReference type="ChEBI" id="CHEBI:23378"/>
        <label>A2</label>
    </ligand>
</feature>
<feature type="binding site" evidence="3">
    <location>
        <position position="204"/>
    </location>
    <ligand>
        <name>Cu cation</name>
        <dbReference type="ChEBI" id="CHEBI:23378"/>
        <label>A2</label>
    </ligand>
</feature>
<feature type="binding site" evidence="3">
    <location>
        <position position="207"/>
    </location>
    <ligand>
        <name>Cu cation</name>
        <dbReference type="ChEBI" id="CHEBI:23378"/>
        <label>A1</label>
    </ligand>
</feature>
<proteinExistence type="inferred from homology"/>
<reference key="1">
    <citation type="journal article" date="1998" name="Zool. Sci.">
        <title>The complete sequence of mitochondrial genome from a gynogenetic triploid 'ginbuna' (Carassius auratus langsdorfi).</title>
        <authorList>
            <person name="Murakami M."/>
            <person name="Yamashita Y."/>
            <person name="Fujitani H."/>
        </authorList>
    </citation>
    <scope>NUCLEOTIDE SEQUENCE [GENOMIC DNA]</scope>
    <source>
        <strain>AZ3 / Langsdorfi</strain>
        <tissue>Oocyte</tissue>
    </source>
</reference>
<comment type="function">
    <text evidence="2">Component of the cytochrome c oxidase, the last enzyme in the mitochondrial electron transport chain which drives oxidative phosphorylation. The respiratory chain contains 3 multisubunit complexes succinate dehydrogenase (complex II, CII), ubiquinol-cytochrome c oxidoreductase (cytochrome b-c1 complex, complex III, CIII) and cytochrome c oxidase (complex IV, CIV), that cooperate to transfer electrons derived from NADH and succinate to molecular oxygen, creating an electrochemical gradient over the inner membrane that drives transmembrane transport and the ATP synthase. Cytochrome c oxidase is the component of the respiratory chain that catalyzes the reduction of oxygen to water. Electrons originating from reduced cytochrome c in the intermembrane space (IMS) are transferred via the dinuclear copper A center (CU(A)) of subunit 2 and heme A of subunit 1 to the active site in subunit 1, a binuclear center (BNC) formed by heme A3 and copper B (CU(B)). The BNC reduces molecular oxygen to 2 water molecules using 4 electrons from cytochrome c in the IMS and 4 protons from the mitochondrial matrix.</text>
</comment>
<comment type="catalytic activity">
    <reaction evidence="2">
        <text>4 Fe(II)-[cytochrome c] + O2 + 8 H(+)(in) = 4 Fe(III)-[cytochrome c] + 2 H2O + 4 H(+)(out)</text>
        <dbReference type="Rhea" id="RHEA:11436"/>
        <dbReference type="Rhea" id="RHEA-COMP:10350"/>
        <dbReference type="Rhea" id="RHEA-COMP:14399"/>
        <dbReference type="ChEBI" id="CHEBI:15377"/>
        <dbReference type="ChEBI" id="CHEBI:15378"/>
        <dbReference type="ChEBI" id="CHEBI:15379"/>
        <dbReference type="ChEBI" id="CHEBI:29033"/>
        <dbReference type="ChEBI" id="CHEBI:29034"/>
        <dbReference type="EC" id="7.1.1.9"/>
    </reaction>
    <physiologicalReaction direction="left-to-right" evidence="2">
        <dbReference type="Rhea" id="RHEA:11437"/>
    </physiologicalReaction>
</comment>
<comment type="cofactor">
    <cofactor evidence="3">
        <name>Cu cation</name>
        <dbReference type="ChEBI" id="CHEBI:23378"/>
    </cofactor>
    <text evidence="3">Binds a dinuclear copper A center per subunit.</text>
</comment>
<comment type="subunit">
    <text evidence="1 3">Component of the cytochrome c oxidase (complex IV, CIV), a multisubunit enzyme composed of 14 subunits. The complex is composed of a catalytic core of 3 subunits MT-CO1, MT-CO2 and MT-CO3, encoded in the mitochondrial DNA, and 11 supernumerary subunits COX4I, COX5A, COX5B, COX6A, COX6B, COX6C, COX7A, COX7B, COX7C, COX8 and NDUFA4, which are encoded in the nuclear genome. The complex exists as a monomer or a dimer and forms supercomplexes (SCs) in the inner mitochondrial membrane with NADH-ubiquinone oxidoreductase (complex I, CI) and ubiquinol-cytochrome c oxidoreductase (cytochrome b-c1 complex, complex III, CIII), resulting in different assemblies (supercomplex SCI(1)III(2)IV(1) and megacomplex MCI(2)III(2)IV(2)) (By similarity). Found in a complex with TMEM177, COA6, COX18, COX20, SCO1 and SCO2. Interacts with TMEM177 in a COX20-dependent manner. Interacts with COX20. Interacts with COX16 (By similarity).</text>
</comment>
<comment type="subcellular location">
    <subcellularLocation>
        <location evidence="3">Mitochondrion inner membrane</location>
        <topology evidence="3">Multi-pass membrane protein</topology>
    </subcellularLocation>
</comment>
<comment type="similarity">
    <text evidence="4">Belongs to the cytochrome c oxidase subunit 2 family.</text>
</comment>
<keyword id="KW-0186">Copper</keyword>
<keyword id="KW-0249">Electron transport</keyword>
<keyword id="KW-0460">Magnesium</keyword>
<keyword id="KW-0472">Membrane</keyword>
<keyword id="KW-0479">Metal-binding</keyword>
<keyword id="KW-0496">Mitochondrion</keyword>
<keyword id="KW-0999">Mitochondrion inner membrane</keyword>
<keyword id="KW-1185">Reference proteome</keyword>
<keyword id="KW-0679">Respiratory chain</keyword>
<keyword id="KW-1278">Translocase</keyword>
<keyword id="KW-0812">Transmembrane</keyword>
<keyword id="KW-1133">Transmembrane helix</keyword>
<keyword id="KW-0813">Transport</keyword>
<geneLocation type="mitochondrion"/>
<protein>
    <recommendedName>
        <fullName>Cytochrome c oxidase subunit 2</fullName>
        <ecNumber>7.1.1.9</ecNumber>
    </recommendedName>
    <alternativeName>
        <fullName>Cytochrome c oxidase polypeptide II</fullName>
    </alternativeName>
</protein>
<dbReference type="EC" id="7.1.1.9"/>
<dbReference type="EMBL" id="AB006953">
    <property type="protein sequence ID" value="BAA31241.1"/>
    <property type="molecule type" value="Genomic_DNA"/>
</dbReference>
<dbReference type="SMR" id="O78682"/>
<dbReference type="CTD" id="4513"/>
<dbReference type="OrthoDB" id="539285at2759"/>
<dbReference type="Proteomes" id="UP000515129">
    <property type="component" value="Mitochondrion MT"/>
</dbReference>
<dbReference type="GO" id="GO:0005743">
    <property type="term" value="C:mitochondrial inner membrane"/>
    <property type="evidence" value="ECO:0007669"/>
    <property type="project" value="UniProtKB-SubCell"/>
</dbReference>
<dbReference type="GO" id="GO:0045277">
    <property type="term" value="C:respiratory chain complex IV"/>
    <property type="evidence" value="ECO:0000250"/>
    <property type="project" value="UniProtKB"/>
</dbReference>
<dbReference type="GO" id="GO:0005507">
    <property type="term" value="F:copper ion binding"/>
    <property type="evidence" value="ECO:0007669"/>
    <property type="project" value="InterPro"/>
</dbReference>
<dbReference type="GO" id="GO:0004129">
    <property type="term" value="F:cytochrome-c oxidase activity"/>
    <property type="evidence" value="ECO:0007669"/>
    <property type="project" value="UniProtKB-EC"/>
</dbReference>
<dbReference type="GO" id="GO:0042773">
    <property type="term" value="P:ATP synthesis coupled electron transport"/>
    <property type="evidence" value="ECO:0007669"/>
    <property type="project" value="TreeGrafter"/>
</dbReference>
<dbReference type="CDD" id="cd13912">
    <property type="entry name" value="CcO_II_C"/>
    <property type="match status" value="1"/>
</dbReference>
<dbReference type="FunFam" id="1.10.287.90:FF:000001">
    <property type="entry name" value="Cytochrome c oxidase subunit 2"/>
    <property type="match status" value="1"/>
</dbReference>
<dbReference type="FunFam" id="2.60.40.420:FF:000001">
    <property type="entry name" value="Cytochrome c oxidase subunit 2"/>
    <property type="match status" value="1"/>
</dbReference>
<dbReference type="Gene3D" id="1.10.287.90">
    <property type="match status" value="1"/>
</dbReference>
<dbReference type="Gene3D" id="2.60.40.420">
    <property type="entry name" value="Cupredoxins - blue copper proteins"/>
    <property type="match status" value="1"/>
</dbReference>
<dbReference type="InterPro" id="IPR045187">
    <property type="entry name" value="CcO_II"/>
</dbReference>
<dbReference type="InterPro" id="IPR002429">
    <property type="entry name" value="CcO_II-like_C"/>
</dbReference>
<dbReference type="InterPro" id="IPR034210">
    <property type="entry name" value="CcO_II_C"/>
</dbReference>
<dbReference type="InterPro" id="IPR001505">
    <property type="entry name" value="Copper_CuA"/>
</dbReference>
<dbReference type="InterPro" id="IPR008972">
    <property type="entry name" value="Cupredoxin"/>
</dbReference>
<dbReference type="InterPro" id="IPR014222">
    <property type="entry name" value="Cyt_c_oxidase_su2"/>
</dbReference>
<dbReference type="InterPro" id="IPR011759">
    <property type="entry name" value="Cyt_c_oxidase_su2_TM_dom"/>
</dbReference>
<dbReference type="InterPro" id="IPR036257">
    <property type="entry name" value="Cyt_c_oxidase_su2_TM_sf"/>
</dbReference>
<dbReference type="NCBIfam" id="TIGR02866">
    <property type="entry name" value="CoxB"/>
    <property type="match status" value="1"/>
</dbReference>
<dbReference type="PANTHER" id="PTHR22888:SF9">
    <property type="entry name" value="CYTOCHROME C OXIDASE SUBUNIT 2"/>
    <property type="match status" value="1"/>
</dbReference>
<dbReference type="PANTHER" id="PTHR22888">
    <property type="entry name" value="CYTOCHROME C OXIDASE, SUBUNIT II"/>
    <property type="match status" value="1"/>
</dbReference>
<dbReference type="Pfam" id="PF00116">
    <property type="entry name" value="COX2"/>
    <property type="match status" value="1"/>
</dbReference>
<dbReference type="Pfam" id="PF02790">
    <property type="entry name" value="COX2_TM"/>
    <property type="match status" value="1"/>
</dbReference>
<dbReference type="PRINTS" id="PR01166">
    <property type="entry name" value="CYCOXIDASEII"/>
</dbReference>
<dbReference type="SUPFAM" id="SSF49503">
    <property type="entry name" value="Cupredoxins"/>
    <property type="match status" value="1"/>
</dbReference>
<dbReference type="SUPFAM" id="SSF81464">
    <property type="entry name" value="Cytochrome c oxidase subunit II-like, transmembrane region"/>
    <property type="match status" value="1"/>
</dbReference>
<dbReference type="PROSITE" id="PS00078">
    <property type="entry name" value="COX2"/>
    <property type="match status" value="1"/>
</dbReference>
<dbReference type="PROSITE" id="PS50857">
    <property type="entry name" value="COX2_CUA"/>
    <property type="match status" value="1"/>
</dbReference>
<dbReference type="PROSITE" id="PS50999">
    <property type="entry name" value="COX2_TM"/>
    <property type="match status" value="1"/>
</dbReference>
<accession>O78682</accession>
<gene>
    <name type="primary">mt-co2</name>
    <name type="synonym">coii</name>
    <name type="synonym">coxii</name>
    <name type="synonym">mtco2</name>
</gene>